<name>FEOC_YERPS</name>
<organism>
    <name type="scientific">Yersinia pseudotuberculosis serotype I (strain IP32953)</name>
    <dbReference type="NCBI Taxonomy" id="273123"/>
    <lineage>
        <taxon>Bacteria</taxon>
        <taxon>Pseudomonadati</taxon>
        <taxon>Pseudomonadota</taxon>
        <taxon>Gammaproteobacteria</taxon>
        <taxon>Enterobacterales</taxon>
        <taxon>Yersiniaceae</taxon>
        <taxon>Yersinia</taxon>
    </lineage>
</organism>
<accession>Q664K0</accession>
<evidence type="ECO:0000255" key="1">
    <source>
        <dbReference type="HAMAP-Rule" id="MF_01586"/>
    </source>
</evidence>
<keyword id="KW-0238">DNA-binding</keyword>
<keyword id="KW-0408">Iron</keyword>
<keyword id="KW-0411">Iron-sulfur</keyword>
<keyword id="KW-0479">Metal-binding</keyword>
<keyword id="KW-0678">Repressor</keyword>
<keyword id="KW-0804">Transcription</keyword>
<keyword id="KW-0805">Transcription regulation</keyword>
<reference key="1">
    <citation type="journal article" date="2004" name="Proc. Natl. Acad. Sci. U.S.A.">
        <title>Insights into the evolution of Yersinia pestis through whole-genome comparison with Yersinia pseudotuberculosis.</title>
        <authorList>
            <person name="Chain P.S.G."/>
            <person name="Carniel E."/>
            <person name="Larimer F.W."/>
            <person name="Lamerdin J."/>
            <person name="Stoutland P.O."/>
            <person name="Regala W.M."/>
            <person name="Georgescu A.M."/>
            <person name="Vergez L.M."/>
            <person name="Land M.L."/>
            <person name="Motin V.L."/>
            <person name="Brubaker R.R."/>
            <person name="Fowler J."/>
            <person name="Hinnebusch J."/>
            <person name="Marceau M."/>
            <person name="Medigue C."/>
            <person name="Simonet M."/>
            <person name="Chenal-Francisque V."/>
            <person name="Souza B."/>
            <person name="Dacheux D."/>
            <person name="Elliott J.M."/>
            <person name="Derbise A."/>
            <person name="Hauser L.J."/>
            <person name="Garcia E."/>
        </authorList>
    </citation>
    <scope>NUCLEOTIDE SEQUENCE [LARGE SCALE GENOMIC DNA]</scope>
    <source>
        <strain>IP32953</strain>
    </source>
</reference>
<dbReference type="EMBL" id="BX936398">
    <property type="protein sequence ID" value="CAH23007.1"/>
    <property type="molecule type" value="Genomic_DNA"/>
</dbReference>
<dbReference type="RefSeq" id="WP_002208920.1">
    <property type="nucleotide sequence ID" value="NZ_CP009712.1"/>
</dbReference>
<dbReference type="SMR" id="Q664K0"/>
<dbReference type="KEGG" id="ypo:BZ17_2816"/>
<dbReference type="KEGG" id="yps:YPTB3769"/>
<dbReference type="PATRIC" id="fig|273123.14.peg.2955"/>
<dbReference type="Proteomes" id="UP000001011">
    <property type="component" value="Chromosome"/>
</dbReference>
<dbReference type="GO" id="GO:0003677">
    <property type="term" value="F:DNA binding"/>
    <property type="evidence" value="ECO:0007669"/>
    <property type="project" value="UniProtKB-KW"/>
</dbReference>
<dbReference type="GO" id="GO:0005506">
    <property type="term" value="F:iron ion binding"/>
    <property type="evidence" value="ECO:0007669"/>
    <property type="project" value="UniProtKB-UniRule"/>
</dbReference>
<dbReference type="GO" id="GO:0051536">
    <property type="term" value="F:iron-sulfur cluster binding"/>
    <property type="evidence" value="ECO:0007669"/>
    <property type="project" value="UniProtKB-KW"/>
</dbReference>
<dbReference type="Gene3D" id="1.10.10.10">
    <property type="entry name" value="Winged helix-like DNA-binding domain superfamily/Winged helix DNA-binding domain"/>
    <property type="match status" value="1"/>
</dbReference>
<dbReference type="HAMAP" id="MF_01586">
    <property type="entry name" value="FeoC"/>
    <property type="match status" value="1"/>
</dbReference>
<dbReference type="InterPro" id="IPR023732">
    <property type="entry name" value="FeoC"/>
</dbReference>
<dbReference type="InterPro" id="IPR015102">
    <property type="entry name" value="Tscrpt_reg_HTH_FeoC"/>
</dbReference>
<dbReference type="InterPro" id="IPR036388">
    <property type="entry name" value="WH-like_DNA-bd_sf"/>
</dbReference>
<dbReference type="InterPro" id="IPR036390">
    <property type="entry name" value="WH_DNA-bd_sf"/>
</dbReference>
<dbReference type="Pfam" id="PF09012">
    <property type="entry name" value="FeoC"/>
    <property type="match status" value="1"/>
</dbReference>
<dbReference type="SUPFAM" id="SSF46785">
    <property type="entry name" value="Winged helix' DNA-binding domain"/>
    <property type="match status" value="1"/>
</dbReference>
<protein>
    <recommendedName>
        <fullName evidence="1">Probable [Fe-S]-dependent transcriptional repressor</fullName>
    </recommendedName>
</protein>
<gene>
    <name evidence="1" type="primary">feoC</name>
    <name type="ordered locus">YPTB3769</name>
</gene>
<sequence length="85" mass="9232">MASLLQLRDAIALNGSAEASQLSRQLAIPLPLVNAMLEKLTAMGKIERIELDHSGCLTGSCKSCPEGHQHCNTVIYQLKEPHAHQ</sequence>
<comment type="function">
    <text evidence="1">May function as a transcriptional regulator that controls feoABC expression.</text>
</comment>
<comment type="similarity">
    <text evidence="1">Belongs to the FeoC family.</text>
</comment>
<proteinExistence type="inferred from homology"/>
<feature type="chain" id="PRO_0000313078" description="Probable [Fe-S]-dependent transcriptional repressor">
    <location>
        <begin position="1"/>
        <end position="85"/>
    </location>
</feature>
<feature type="binding site" evidence="1">
    <location>
        <position position="56"/>
    </location>
    <ligand>
        <name>iron-sulfur cluster</name>
        <dbReference type="ChEBI" id="CHEBI:30408"/>
    </ligand>
</feature>
<feature type="binding site" evidence="1">
    <location>
        <position position="61"/>
    </location>
    <ligand>
        <name>iron-sulfur cluster</name>
        <dbReference type="ChEBI" id="CHEBI:30408"/>
    </ligand>
</feature>
<feature type="binding site" evidence="1">
    <location>
        <position position="64"/>
    </location>
    <ligand>
        <name>iron-sulfur cluster</name>
        <dbReference type="ChEBI" id="CHEBI:30408"/>
    </ligand>
</feature>
<feature type="binding site" evidence="1">
    <location>
        <position position="71"/>
    </location>
    <ligand>
        <name>iron-sulfur cluster</name>
        <dbReference type="ChEBI" id="CHEBI:30408"/>
    </ligand>
</feature>